<dbReference type="EMBL" id="CU928160">
    <property type="protein sequence ID" value="CAR00579.1"/>
    <property type="molecule type" value="Genomic_DNA"/>
</dbReference>
<dbReference type="RefSeq" id="WP_000003377.1">
    <property type="nucleotide sequence ID" value="NC_011741.1"/>
</dbReference>
<dbReference type="SMR" id="B7M496"/>
<dbReference type="GeneID" id="86944403"/>
<dbReference type="KEGG" id="ecr:ECIAI1_3782"/>
<dbReference type="HOGENOM" id="CLU_111574_1_0_6"/>
<dbReference type="GO" id="GO:0005737">
    <property type="term" value="C:cytoplasm"/>
    <property type="evidence" value="ECO:0007669"/>
    <property type="project" value="UniProtKB-SubCell"/>
</dbReference>
<dbReference type="GO" id="GO:0051082">
    <property type="term" value="F:unfolded protein binding"/>
    <property type="evidence" value="ECO:0007669"/>
    <property type="project" value="InterPro"/>
</dbReference>
<dbReference type="GO" id="GO:0006457">
    <property type="term" value="P:protein folding"/>
    <property type="evidence" value="ECO:0007669"/>
    <property type="project" value="UniProtKB-UniRule"/>
</dbReference>
<dbReference type="GO" id="GO:0051262">
    <property type="term" value="P:protein tetramerization"/>
    <property type="evidence" value="ECO:0007669"/>
    <property type="project" value="InterPro"/>
</dbReference>
<dbReference type="GO" id="GO:0015031">
    <property type="term" value="P:protein transport"/>
    <property type="evidence" value="ECO:0007669"/>
    <property type="project" value="UniProtKB-UniRule"/>
</dbReference>
<dbReference type="CDD" id="cd00557">
    <property type="entry name" value="Translocase_SecB"/>
    <property type="match status" value="1"/>
</dbReference>
<dbReference type="FunFam" id="3.10.420.10:FF:000001">
    <property type="entry name" value="Protein-export chaperone SecB"/>
    <property type="match status" value="1"/>
</dbReference>
<dbReference type="Gene3D" id="3.10.420.10">
    <property type="entry name" value="SecB-like"/>
    <property type="match status" value="1"/>
</dbReference>
<dbReference type="HAMAP" id="MF_00821">
    <property type="entry name" value="SecB"/>
    <property type="match status" value="1"/>
</dbReference>
<dbReference type="InterPro" id="IPR003708">
    <property type="entry name" value="SecB"/>
</dbReference>
<dbReference type="InterPro" id="IPR035958">
    <property type="entry name" value="SecB-like_sf"/>
</dbReference>
<dbReference type="NCBIfam" id="NF004390">
    <property type="entry name" value="PRK05751.1-1"/>
    <property type="match status" value="1"/>
</dbReference>
<dbReference type="NCBIfam" id="NF004393">
    <property type="entry name" value="PRK05751.1-4"/>
    <property type="match status" value="1"/>
</dbReference>
<dbReference type="NCBIfam" id="TIGR00809">
    <property type="entry name" value="secB"/>
    <property type="match status" value="1"/>
</dbReference>
<dbReference type="PANTHER" id="PTHR36918">
    <property type="match status" value="1"/>
</dbReference>
<dbReference type="PANTHER" id="PTHR36918:SF1">
    <property type="entry name" value="PROTEIN-EXPORT PROTEIN SECB"/>
    <property type="match status" value="1"/>
</dbReference>
<dbReference type="Pfam" id="PF02556">
    <property type="entry name" value="SecB"/>
    <property type="match status" value="1"/>
</dbReference>
<dbReference type="PRINTS" id="PR01594">
    <property type="entry name" value="SECBCHAPRONE"/>
</dbReference>
<dbReference type="SUPFAM" id="SSF54611">
    <property type="entry name" value="SecB-like"/>
    <property type="match status" value="1"/>
</dbReference>
<accession>B7M496</accession>
<comment type="function">
    <text evidence="1">One of the proteins required for the normal export of preproteins out of the cell cytoplasm. It is a molecular chaperone that binds to a subset of precursor proteins, maintaining them in a translocation-competent state. It also specifically binds to its receptor SecA.</text>
</comment>
<comment type="subunit">
    <text evidence="1">Homotetramer, a dimer of dimers. One homotetramer interacts with 1 SecA dimer.</text>
</comment>
<comment type="subcellular location">
    <subcellularLocation>
        <location evidence="1">Cytoplasm</location>
    </subcellularLocation>
</comment>
<comment type="similarity">
    <text evidence="1">Belongs to the SecB family.</text>
</comment>
<proteinExistence type="inferred from homology"/>
<evidence type="ECO:0000255" key="1">
    <source>
        <dbReference type="HAMAP-Rule" id="MF_00821"/>
    </source>
</evidence>
<keyword id="KW-0143">Chaperone</keyword>
<keyword id="KW-0963">Cytoplasm</keyword>
<keyword id="KW-0653">Protein transport</keyword>
<keyword id="KW-0811">Translocation</keyword>
<keyword id="KW-0813">Transport</keyword>
<organism>
    <name type="scientific">Escherichia coli O8 (strain IAI1)</name>
    <dbReference type="NCBI Taxonomy" id="585034"/>
    <lineage>
        <taxon>Bacteria</taxon>
        <taxon>Pseudomonadati</taxon>
        <taxon>Pseudomonadota</taxon>
        <taxon>Gammaproteobacteria</taxon>
        <taxon>Enterobacterales</taxon>
        <taxon>Enterobacteriaceae</taxon>
        <taxon>Escherichia</taxon>
    </lineage>
</organism>
<name>SECB_ECO8A</name>
<reference key="1">
    <citation type="journal article" date="2009" name="PLoS Genet.">
        <title>Organised genome dynamics in the Escherichia coli species results in highly diverse adaptive paths.</title>
        <authorList>
            <person name="Touchon M."/>
            <person name="Hoede C."/>
            <person name="Tenaillon O."/>
            <person name="Barbe V."/>
            <person name="Baeriswyl S."/>
            <person name="Bidet P."/>
            <person name="Bingen E."/>
            <person name="Bonacorsi S."/>
            <person name="Bouchier C."/>
            <person name="Bouvet O."/>
            <person name="Calteau A."/>
            <person name="Chiapello H."/>
            <person name="Clermont O."/>
            <person name="Cruveiller S."/>
            <person name="Danchin A."/>
            <person name="Diard M."/>
            <person name="Dossat C."/>
            <person name="Karoui M.E."/>
            <person name="Frapy E."/>
            <person name="Garry L."/>
            <person name="Ghigo J.M."/>
            <person name="Gilles A.M."/>
            <person name="Johnson J."/>
            <person name="Le Bouguenec C."/>
            <person name="Lescat M."/>
            <person name="Mangenot S."/>
            <person name="Martinez-Jehanne V."/>
            <person name="Matic I."/>
            <person name="Nassif X."/>
            <person name="Oztas S."/>
            <person name="Petit M.A."/>
            <person name="Pichon C."/>
            <person name="Rouy Z."/>
            <person name="Ruf C.S."/>
            <person name="Schneider D."/>
            <person name="Tourret J."/>
            <person name="Vacherie B."/>
            <person name="Vallenet D."/>
            <person name="Medigue C."/>
            <person name="Rocha E.P.C."/>
            <person name="Denamur E."/>
        </authorList>
    </citation>
    <scope>NUCLEOTIDE SEQUENCE [LARGE SCALE GENOMIC DNA]</scope>
    <source>
        <strain>IAI1</strain>
    </source>
</reference>
<sequence length="155" mass="17277">MSEQNNTEMTFQIQRIYTKDISFEAPNAPHVFQKDWQPEVKLDLDTASSQLADDVYEVVLRVTVTASLGEETAFLCEVQQGGIFSIAGIEGTQMAHCLGAYCPNILFPYARECITSMVSRGTFPQLNLAPVNFDALFMNYLQQQAGEGTEEHQDA</sequence>
<gene>
    <name evidence="1" type="primary">secB</name>
    <name type="ordered locus">ECIAI1_3782</name>
</gene>
<feature type="chain" id="PRO_1000195323" description="Protein-export protein SecB">
    <location>
        <begin position="1"/>
        <end position="155"/>
    </location>
</feature>
<protein>
    <recommendedName>
        <fullName evidence="1">Protein-export protein SecB</fullName>
    </recommendedName>
</protein>